<gene>
    <name type="ORF">K06H7.1</name>
</gene>
<organism>
    <name type="scientific">Caenorhabditis elegans</name>
    <dbReference type="NCBI Taxonomy" id="6239"/>
    <lineage>
        <taxon>Eukaryota</taxon>
        <taxon>Metazoa</taxon>
        <taxon>Ecdysozoa</taxon>
        <taxon>Nematoda</taxon>
        <taxon>Chromadorea</taxon>
        <taxon>Rhabditida</taxon>
        <taxon>Rhabditina</taxon>
        <taxon>Rhabditomorpha</taxon>
        <taxon>Rhabditoidea</taxon>
        <taxon>Rhabditidae</taxon>
        <taxon>Peloderinae</taxon>
        <taxon>Caenorhabditis</taxon>
    </lineage>
</organism>
<proteinExistence type="predicted"/>
<dbReference type="EMBL" id="FO080533">
    <property type="protein sequence ID" value="CCD64451.1"/>
    <property type="molecule type" value="Genomic_DNA"/>
</dbReference>
<dbReference type="PIR" id="S44841">
    <property type="entry name" value="S44841"/>
</dbReference>
<dbReference type="RefSeq" id="NP_498769.1">
    <property type="nucleotide sequence ID" value="NM_066368.3"/>
</dbReference>
<dbReference type="BioGRID" id="51782">
    <property type="interactions" value="11"/>
</dbReference>
<dbReference type="FunCoup" id="P34509">
    <property type="interactions" value="119"/>
</dbReference>
<dbReference type="IntAct" id="P34509">
    <property type="interactions" value="11"/>
</dbReference>
<dbReference type="STRING" id="6239.K06H7.1.1"/>
<dbReference type="PaxDb" id="6239-K06H7.1"/>
<dbReference type="EnsemblMetazoa" id="K06H7.1.1">
    <property type="protein sequence ID" value="K06H7.1.1"/>
    <property type="gene ID" value="WBGene00019455"/>
</dbReference>
<dbReference type="GeneID" id="187076"/>
<dbReference type="KEGG" id="cel:CELE_K06H7.1"/>
<dbReference type="UCSC" id="K06H7.1">
    <property type="organism name" value="c. elegans"/>
</dbReference>
<dbReference type="AGR" id="WB:WBGene00019455"/>
<dbReference type="CTD" id="187076"/>
<dbReference type="WormBase" id="K06H7.1">
    <property type="protein sequence ID" value="CE26940"/>
    <property type="gene ID" value="WBGene00019455"/>
</dbReference>
<dbReference type="eggNOG" id="ENOG502TF6W">
    <property type="taxonomic scope" value="Eukaryota"/>
</dbReference>
<dbReference type="GeneTree" id="ENSGT00390000001019"/>
<dbReference type="HOGENOM" id="CLU_915958_0_0_1"/>
<dbReference type="InParanoid" id="P34509"/>
<dbReference type="OMA" id="HQKQCFE"/>
<dbReference type="OrthoDB" id="5866113at2759"/>
<dbReference type="PRO" id="PR:P34509"/>
<dbReference type="Proteomes" id="UP000001940">
    <property type="component" value="Chromosome III"/>
</dbReference>
<dbReference type="Bgee" id="WBGene00019455">
    <property type="expression patterns" value="Expressed in anatomical system and 3 other cell types or tissues"/>
</dbReference>
<dbReference type="InterPro" id="IPR042317">
    <property type="entry name" value="She-1-like"/>
</dbReference>
<dbReference type="PANTHER" id="PTHR31006">
    <property type="entry name" value="F-BOX DOMAIN-CONTAINING PROTEIN-RELATED-RELATED"/>
    <property type="match status" value="1"/>
</dbReference>
<dbReference type="PANTHER" id="PTHR31006:SF5">
    <property type="entry name" value="PROTEIN CBG09232"/>
    <property type="match status" value="1"/>
</dbReference>
<accession>P34509</accession>
<sequence>MLQPNFRRFEPSYSWKSREKSTENRGFLSRMCGIKQKMNKYNCRGKYQETNDQNLMQDSGYSLKIISSGDEQITIVYTSRLGKMKDLQVPEIEISGVLLERLEACNYRLDELFIDLKASKCICSSNELLNIPKIIVRRLFLKMESLEMLEWWIERVDPNSLNELCIAPHGEYPLDIPSKIFDLPHFQNCKTLSIMEHCSFSTDQFLALCIAIPNFSFYSDRIDENIVAHAIKKRLSLNDQFVVLEWFFTKHVNVEKVTGDLKCTNYDRKERFDVKTECFEPVDVYSVPDENNKKTSLLVLKDSTDNFKPYNIVAFS</sequence>
<feature type="chain" id="PRO_0000065402" description="Uncharacterized protein K06H7.1">
    <location>
        <begin position="1"/>
        <end position="316"/>
    </location>
</feature>
<keyword id="KW-1185">Reference proteome</keyword>
<reference key="1">
    <citation type="journal article" date="1994" name="Nature">
        <title>2.2 Mb of contiguous nucleotide sequence from chromosome III of C. elegans.</title>
        <authorList>
            <person name="Wilson R."/>
            <person name="Ainscough R."/>
            <person name="Anderson K."/>
            <person name="Baynes C."/>
            <person name="Berks M."/>
            <person name="Bonfield J."/>
            <person name="Burton J."/>
            <person name="Connell M."/>
            <person name="Copsey T."/>
            <person name="Cooper J."/>
            <person name="Coulson A."/>
            <person name="Craxton M."/>
            <person name="Dear S."/>
            <person name="Du Z."/>
            <person name="Durbin R."/>
            <person name="Favello A."/>
            <person name="Fraser A."/>
            <person name="Fulton L."/>
            <person name="Gardner A."/>
            <person name="Green P."/>
            <person name="Hawkins T."/>
            <person name="Hillier L."/>
            <person name="Jier M."/>
            <person name="Johnston L."/>
            <person name="Jones M."/>
            <person name="Kershaw J."/>
            <person name="Kirsten J."/>
            <person name="Laisster N."/>
            <person name="Latreille P."/>
            <person name="Lightning J."/>
            <person name="Lloyd C."/>
            <person name="Mortimore B."/>
            <person name="O'Callaghan M."/>
            <person name="Parsons J."/>
            <person name="Percy C."/>
            <person name="Rifken L."/>
            <person name="Roopra A."/>
            <person name="Saunders D."/>
            <person name="Shownkeen R."/>
            <person name="Sims M."/>
            <person name="Smaldon N."/>
            <person name="Smith A."/>
            <person name="Smith M."/>
            <person name="Sonnhammer E."/>
            <person name="Staden R."/>
            <person name="Sulston J."/>
            <person name="Thierry-Mieg J."/>
            <person name="Thomas K."/>
            <person name="Vaudin M."/>
            <person name="Vaughan K."/>
            <person name="Waterston R."/>
            <person name="Watson A."/>
            <person name="Weinstock L."/>
            <person name="Wilkinson-Sproat J."/>
            <person name="Wohldman P."/>
        </authorList>
    </citation>
    <scope>NUCLEOTIDE SEQUENCE [LARGE SCALE GENOMIC DNA]</scope>
    <source>
        <strain>Bristol N2</strain>
    </source>
</reference>
<reference key="2">
    <citation type="journal article" date="1998" name="Science">
        <title>Genome sequence of the nematode C. elegans: a platform for investigating biology.</title>
        <authorList>
            <consortium name="The C. elegans sequencing consortium"/>
        </authorList>
    </citation>
    <scope>NUCLEOTIDE SEQUENCE [LARGE SCALE GENOMIC DNA]</scope>
    <source>
        <strain>Bristol N2</strain>
    </source>
</reference>
<name>YMX1_CAEEL</name>
<protein>
    <recommendedName>
        <fullName>Uncharacterized protein K06H7.1</fullName>
    </recommendedName>
</protein>